<proteinExistence type="inferred from homology"/>
<sequence length="627" mass="71393">MQRVLNKIISKDTINTMGKVAISKKVEKLRTFMKDQSLSAYIVPSEDAHQSEYICVKDKRREYISGFSGSAGCVVITLDNQLLWTDGRYWLQAEKELESNWKIMKDRVVGEPTIQDWLLSNLNKENKVGIDSRLISKGYYDSMKLVLKEKSIDIKFDEDGENLIDKVRESFKDEEEIPEYPKNSIFFLEDKFTGKQSNEKLKEIREEMKKQSADLMVVSALDEIAWLLNLRGSDISFNPVFLSYVVVEHEKVTLFVDESKLNDKTKSQLPSGIAISPYSSVFEYLRNSDKQGKKIWIDPRSSVALYNCVSISNLLEKINPILLSKAIKNETEIQGMKNAHIRDAVALIQFLAWMEEEIVEKSDETSHTEYSVCEKLEGFRRQQTDFVSLSFDTISSINANGAIIHYKPDETTSATIVKGMYLVDSGAQYLDGTTDVTRTLHYGKPTQHEIDCYTRVLRGHVGLSLLKFPNRVNGRDIDCVARTHLWSVGLDYAHGTGHGVGSFLNVHEGPQGISYRAIANPTNLQAGMTLTNEPGYYESGNFGIRIENVMIVAPVTTQFNNGKFIGFDNITLVPYERKLINLEMLTKDEINFINDYYKEIGEKILPLIEKTNNQKSINWLKNQIKPL</sequence>
<accession>Q54G06</accession>
<protein>
    <recommendedName>
        <fullName>Xaa-Pro aminopeptidase 1</fullName>
        <ecNumber evidence="2">3.4.11.9</ecNumber>
    </recommendedName>
    <alternativeName>
        <fullName>Aminoacylproline aminopeptidase</fullName>
    </alternativeName>
    <alternativeName>
        <fullName>Cytosolic aminopeptidase P</fullName>
    </alternativeName>
    <alternativeName>
        <fullName>Soluble aminopeptidase P</fullName>
        <shortName>sAmp</shortName>
    </alternativeName>
    <alternativeName>
        <fullName>X-Pro aminopeptidase 1</fullName>
    </alternativeName>
    <alternativeName>
        <fullName>X-prolyl aminopeptidase 1, soluble</fullName>
    </alternativeName>
</protein>
<comment type="function">
    <text evidence="2">Metalloaminopeptidase that catalyzes the removal of a penultimate prolyl residue from the N-termini of peptides, such as Arg-Pro-Pro.</text>
</comment>
<comment type="catalytic activity">
    <reaction evidence="2">
        <text>Release of any N-terminal amino acid, including proline, that is linked to proline, even from a dipeptide or tripeptide.</text>
        <dbReference type="EC" id="3.4.11.9"/>
    </reaction>
</comment>
<comment type="cofactor">
    <cofactor evidence="2">
        <name>Mn(2+)</name>
        <dbReference type="ChEBI" id="CHEBI:29035"/>
    </cofactor>
    <text evidence="2">Binds 2 manganese ions per subunit.</text>
</comment>
<comment type="subunit">
    <text evidence="2">Homodimer.</text>
</comment>
<comment type="subcellular location">
    <subcellularLocation>
        <location evidence="2">Cytoplasm</location>
        <location evidence="2">Cytosol</location>
    </subcellularLocation>
</comment>
<comment type="similarity">
    <text evidence="3">Belongs to the peptidase M24B family.</text>
</comment>
<evidence type="ECO:0000250" key="1">
    <source>
        <dbReference type="UniProtKB" id="O44750"/>
    </source>
</evidence>
<evidence type="ECO:0000250" key="2">
    <source>
        <dbReference type="UniProtKB" id="Q9NQW7"/>
    </source>
</evidence>
<evidence type="ECO:0000305" key="3"/>
<name>XPP1_DICDI</name>
<dbReference type="EC" id="3.4.11.9" evidence="2"/>
<dbReference type="EMBL" id="AAFI02000164">
    <property type="protein sequence ID" value="EAL62111.1"/>
    <property type="molecule type" value="Genomic_DNA"/>
</dbReference>
<dbReference type="RefSeq" id="XP_635611.1">
    <property type="nucleotide sequence ID" value="XM_630519.1"/>
</dbReference>
<dbReference type="SMR" id="Q54G06"/>
<dbReference type="FunCoup" id="Q54G06">
    <property type="interactions" value="678"/>
</dbReference>
<dbReference type="STRING" id="44689.Q54G06"/>
<dbReference type="MEROPS" id="M24.009"/>
<dbReference type="PaxDb" id="44689-DDB0304433"/>
<dbReference type="EnsemblProtists" id="EAL62111">
    <property type="protein sequence ID" value="EAL62111"/>
    <property type="gene ID" value="DDB_G0290501"/>
</dbReference>
<dbReference type="GeneID" id="8627683"/>
<dbReference type="KEGG" id="ddi:DDB_G0290501"/>
<dbReference type="dictyBase" id="DDB_G0290501">
    <property type="gene designation" value="xpnpep1"/>
</dbReference>
<dbReference type="VEuPathDB" id="AmoebaDB:DDB_G0290501"/>
<dbReference type="eggNOG" id="KOG2413">
    <property type="taxonomic scope" value="Eukaryota"/>
</dbReference>
<dbReference type="HOGENOM" id="CLU_011781_2_4_1"/>
<dbReference type="InParanoid" id="Q54G06"/>
<dbReference type="OMA" id="EPGMILS"/>
<dbReference type="PhylomeDB" id="Q54G06"/>
<dbReference type="Reactome" id="R-DDI-163125">
    <property type="pathway name" value="Post-translational modification: synthesis of GPI-anchored proteins"/>
</dbReference>
<dbReference type="PRO" id="PR:Q54G06"/>
<dbReference type="Proteomes" id="UP000002195">
    <property type="component" value="Chromosome 5"/>
</dbReference>
<dbReference type="GO" id="GO:0005829">
    <property type="term" value="C:cytosol"/>
    <property type="evidence" value="ECO:0007669"/>
    <property type="project" value="UniProtKB-SubCell"/>
</dbReference>
<dbReference type="GO" id="GO:0030145">
    <property type="term" value="F:manganese ion binding"/>
    <property type="evidence" value="ECO:0000250"/>
    <property type="project" value="UniProtKB"/>
</dbReference>
<dbReference type="GO" id="GO:0070006">
    <property type="term" value="F:metalloaminopeptidase activity"/>
    <property type="evidence" value="ECO:0000250"/>
    <property type="project" value="UniProtKB"/>
</dbReference>
<dbReference type="GO" id="GO:0010815">
    <property type="term" value="P:bradykinin catabolic process"/>
    <property type="evidence" value="ECO:0000250"/>
    <property type="project" value="UniProtKB"/>
</dbReference>
<dbReference type="GO" id="GO:0006508">
    <property type="term" value="P:proteolysis"/>
    <property type="evidence" value="ECO:0007669"/>
    <property type="project" value="UniProtKB-KW"/>
</dbReference>
<dbReference type="CDD" id="cd01085">
    <property type="entry name" value="APP"/>
    <property type="match status" value="1"/>
</dbReference>
<dbReference type="FunFam" id="3.90.230.10:FF:000007">
    <property type="entry name" value="Xaa-Pro aminopeptidase P"/>
    <property type="match status" value="1"/>
</dbReference>
<dbReference type="FunFam" id="3.40.350.10:FF:000003">
    <property type="entry name" value="Xaa-pro aminopeptidase P"/>
    <property type="match status" value="1"/>
</dbReference>
<dbReference type="Gene3D" id="3.90.230.10">
    <property type="entry name" value="Creatinase/methionine aminopeptidase superfamily"/>
    <property type="match status" value="1"/>
</dbReference>
<dbReference type="Gene3D" id="3.40.350.10">
    <property type="entry name" value="Creatinase/prolidase N-terminal domain"/>
    <property type="match status" value="2"/>
</dbReference>
<dbReference type="InterPro" id="IPR029149">
    <property type="entry name" value="Creatin/AminoP/Spt16_N"/>
</dbReference>
<dbReference type="InterPro" id="IPR036005">
    <property type="entry name" value="Creatinase/aminopeptidase-like"/>
</dbReference>
<dbReference type="InterPro" id="IPR000587">
    <property type="entry name" value="Creatinase_N"/>
</dbReference>
<dbReference type="InterPro" id="IPR000994">
    <property type="entry name" value="Pept_M24"/>
</dbReference>
<dbReference type="InterPro" id="IPR033740">
    <property type="entry name" value="Pept_M24B"/>
</dbReference>
<dbReference type="InterPro" id="IPR032416">
    <property type="entry name" value="Peptidase_M24_C"/>
</dbReference>
<dbReference type="InterPro" id="IPR001131">
    <property type="entry name" value="Peptidase_M24B_aminopep-P_CS"/>
</dbReference>
<dbReference type="InterPro" id="IPR050422">
    <property type="entry name" value="X-Pro_aminopeptidase_P"/>
</dbReference>
<dbReference type="PANTHER" id="PTHR43763">
    <property type="entry name" value="XAA-PRO AMINOPEPTIDASE 1"/>
    <property type="match status" value="1"/>
</dbReference>
<dbReference type="PANTHER" id="PTHR43763:SF6">
    <property type="entry name" value="XAA-PRO AMINOPEPTIDASE 1"/>
    <property type="match status" value="1"/>
</dbReference>
<dbReference type="Pfam" id="PF01321">
    <property type="entry name" value="Creatinase_N"/>
    <property type="match status" value="1"/>
</dbReference>
<dbReference type="Pfam" id="PF16189">
    <property type="entry name" value="Creatinase_N_2"/>
    <property type="match status" value="1"/>
</dbReference>
<dbReference type="Pfam" id="PF00557">
    <property type="entry name" value="Peptidase_M24"/>
    <property type="match status" value="1"/>
</dbReference>
<dbReference type="Pfam" id="PF16188">
    <property type="entry name" value="Peptidase_M24_C"/>
    <property type="match status" value="1"/>
</dbReference>
<dbReference type="SUPFAM" id="SSF55920">
    <property type="entry name" value="Creatinase/aminopeptidase"/>
    <property type="match status" value="1"/>
</dbReference>
<dbReference type="SUPFAM" id="SSF53092">
    <property type="entry name" value="Creatinase/prolidase N-terminal domain"/>
    <property type="match status" value="2"/>
</dbReference>
<dbReference type="PROSITE" id="PS00491">
    <property type="entry name" value="PROLINE_PEPTIDASE"/>
    <property type="match status" value="1"/>
</dbReference>
<feature type="chain" id="PRO_0000328258" description="Xaa-Pro aminopeptidase 1">
    <location>
        <begin position="1"/>
        <end position="627"/>
    </location>
</feature>
<feature type="binding site" evidence="1">
    <location>
        <position position="88"/>
    </location>
    <ligand>
        <name>a peptide</name>
        <dbReference type="ChEBI" id="CHEBI:60466"/>
    </ligand>
</feature>
<feature type="binding site" evidence="1">
    <location>
        <position position="405"/>
    </location>
    <ligand>
        <name>a peptide</name>
        <dbReference type="ChEBI" id="CHEBI:60466"/>
    </ligand>
</feature>
<feature type="binding site" evidence="2">
    <location>
        <position position="424"/>
    </location>
    <ligand>
        <name>Mn(2+)</name>
        <dbReference type="ChEBI" id="CHEBI:29035"/>
        <label>1</label>
    </ligand>
</feature>
<feature type="binding site" evidence="2">
    <location>
        <position position="435"/>
    </location>
    <ligand>
        <name>Mn(2+)</name>
        <dbReference type="ChEBI" id="CHEBI:29035"/>
        <label>1</label>
    </ligand>
</feature>
<feature type="binding site" evidence="2">
    <location>
        <position position="435"/>
    </location>
    <ligand>
        <name>Mn(2+)</name>
        <dbReference type="ChEBI" id="CHEBI:29035"/>
        <label>2</label>
    </ligand>
</feature>
<feature type="binding site" evidence="1">
    <location>
        <position position="498"/>
    </location>
    <ligand>
        <name>a peptide</name>
        <dbReference type="ChEBI" id="CHEBI:60466"/>
    </ligand>
</feature>
<feature type="binding site" evidence="2">
    <location>
        <position position="498"/>
    </location>
    <ligand>
        <name>Mn(2+)</name>
        <dbReference type="ChEBI" id="CHEBI:29035"/>
        <label>2</label>
    </ligand>
</feature>
<feature type="binding site" evidence="1">
    <location>
        <position position="507"/>
    </location>
    <ligand>
        <name>a peptide</name>
        <dbReference type="ChEBI" id="CHEBI:60466"/>
    </ligand>
</feature>
<feature type="binding site" evidence="1">
    <location>
        <position position="533"/>
    </location>
    <ligand>
        <name>a peptide</name>
        <dbReference type="ChEBI" id="CHEBI:60466"/>
    </ligand>
</feature>
<feature type="binding site" evidence="2">
    <location>
        <position position="533"/>
    </location>
    <ligand>
        <name>Mn(2+)</name>
        <dbReference type="ChEBI" id="CHEBI:29035"/>
        <label>2</label>
    </ligand>
</feature>
<feature type="binding site" evidence="2">
    <location>
        <position position="547"/>
    </location>
    <ligand>
        <name>Mn(2+)</name>
        <dbReference type="ChEBI" id="CHEBI:29035"/>
        <label>1</label>
    </ligand>
</feature>
<feature type="binding site" evidence="2">
    <location>
        <position position="547"/>
    </location>
    <ligand>
        <name>Mn(2+)</name>
        <dbReference type="ChEBI" id="CHEBI:29035"/>
        <label>2</label>
    </ligand>
</feature>
<gene>
    <name type="primary">xpnpep1</name>
    <name type="synonym">xpnpepl</name>
    <name type="synonym">xpnpepl1</name>
    <name type="ORF">DDB_G0290501</name>
</gene>
<reference key="1">
    <citation type="journal article" date="2005" name="Nature">
        <title>The genome of the social amoeba Dictyostelium discoideum.</title>
        <authorList>
            <person name="Eichinger L."/>
            <person name="Pachebat J.A."/>
            <person name="Gloeckner G."/>
            <person name="Rajandream M.A."/>
            <person name="Sucgang R."/>
            <person name="Berriman M."/>
            <person name="Song J."/>
            <person name="Olsen R."/>
            <person name="Szafranski K."/>
            <person name="Xu Q."/>
            <person name="Tunggal B."/>
            <person name="Kummerfeld S."/>
            <person name="Madera M."/>
            <person name="Konfortov B.A."/>
            <person name="Rivero F."/>
            <person name="Bankier A.T."/>
            <person name="Lehmann R."/>
            <person name="Hamlin N."/>
            <person name="Davies R."/>
            <person name="Gaudet P."/>
            <person name="Fey P."/>
            <person name="Pilcher K."/>
            <person name="Chen G."/>
            <person name="Saunders D."/>
            <person name="Sodergren E.J."/>
            <person name="Davis P."/>
            <person name="Kerhornou A."/>
            <person name="Nie X."/>
            <person name="Hall N."/>
            <person name="Anjard C."/>
            <person name="Hemphill L."/>
            <person name="Bason N."/>
            <person name="Farbrother P."/>
            <person name="Desany B."/>
            <person name="Just E."/>
            <person name="Morio T."/>
            <person name="Rost R."/>
            <person name="Churcher C.M."/>
            <person name="Cooper J."/>
            <person name="Haydock S."/>
            <person name="van Driessche N."/>
            <person name="Cronin A."/>
            <person name="Goodhead I."/>
            <person name="Muzny D.M."/>
            <person name="Mourier T."/>
            <person name="Pain A."/>
            <person name="Lu M."/>
            <person name="Harper D."/>
            <person name="Lindsay R."/>
            <person name="Hauser H."/>
            <person name="James K.D."/>
            <person name="Quiles M."/>
            <person name="Madan Babu M."/>
            <person name="Saito T."/>
            <person name="Buchrieser C."/>
            <person name="Wardroper A."/>
            <person name="Felder M."/>
            <person name="Thangavelu M."/>
            <person name="Johnson D."/>
            <person name="Knights A."/>
            <person name="Loulseged H."/>
            <person name="Mungall K.L."/>
            <person name="Oliver K."/>
            <person name="Price C."/>
            <person name="Quail M.A."/>
            <person name="Urushihara H."/>
            <person name="Hernandez J."/>
            <person name="Rabbinowitsch E."/>
            <person name="Steffen D."/>
            <person name="Sanders M."/>
            <person name="Ma J."/>
            <person name="Kohara Y."/>
            <person name="Sharp S."/>
            <person name="Simmonds M.N."/>
            <person name="Spiegler S."/>
            <person name="Tivey A."/>
            <person name="Sugano S."/>
            <person name="White B."/>
            <person name="Walker D."/>
            <person name="Woodward J.R."/>
            <person name="Winckler T."/>
            <person name="Tanaka Y."/>
            <person name="Shaulsky G."/>
            <person name="Schleicher M."/>
            <person name="Weinstock G.M."/>
            <person name="Rosenthal A."/>
            <person name="Cox E.C."/>
            <person name="Chisholm R.L."/>
            <person name="Gibbs R.A."/>
            <person name="Loomis W.F."/>
            <person name="Platzer M."/>
            <person name="Kay R.R."/>
            <person name="Williams J.G."/>
            <person name="Dear P.H."/>
            <person name="Noegel A.A."/>
            <person name="Barrell B.G."/>
            <person name="Kuspa A."/>
        </authorList>
    </citation>
    <scope>NUCLEOTIDE SEQUENCE [LARGE SCALE GENOMIC DNA]</scope>
    <source>
        <strain>AX4</strain>
    </source>
</reference>
<keyword id="KW-0031">Aminopeptidase</keyword>
<keyword id="KW-0963">Cytoplasm</keyword>
<keyword id="KW-0378">Hydrolase</keyword>
<keyword id="KW-0464">Manganese</keyword>
<keyword id="KW-0479">Metal-binding</keyword>
<keyword id="KW-0482">Metalloprotease</keyword>
<keyword id="KW-0645">Protease</keyword>
<keyword id="KW-1185">Reference proteome</keyword>
<organism>
    <name type="scientific">Dictyostelium discoideum</name>
    <name type="common">Social amoeba</name>
    <dbReference type="NCBI Taxonomy" id="44689"/>
    <lineage>
        <taxon>Eukaryota</taxon>
        <taxon>Amoebozoa</taxon>
        <taxon>Evosea</taxon>
        <taxon>Eumycetozoa</taxon>
        <taxon>Dictyostelia</taxon>
        <taxon>Dictyosteliales</taxon>
        <taxon>Dictyosteliaceae</taxon>
        <taxon>Dictyostelium</taxon>
    </lineage>
</organism>